<name>ACCA_KLEP7</name>
<gene>
    <name evidence="1" type="primary">accA</name>
    <name type="ordered locus">KPN78578_01970</name>
    <name type="ORF">KPN_00198</name>
</gene>
<organism>
    <name type="scientific">Klebsiella pneumoniae subsp. pneumoniae (strain ATCC 700721 / MGH 78578)</name>
    <dbReference type="NCBI Taxonomy" id="272620"/>
    <lineage>
        <taxon>Bacteria</taxon>
        <taxon>Pseudomonadati</taxon>
        <taxon>Pseudomonadota</taxon>
        <taxon>Gammaproteobacteria</taxon>
        <taxon>Enterobacterales</taxon>
        <taxon>Enterobacteriaceae</taxon>
        <taxon>Klebsiella/Raoultella group</taxon>
        <taxon>Klebsiella</taxon>
        <taxon>Klebsiella pneumoniae complex</taxon>
    </lineage>
</organism>
<sequence>MSLNFLDFEQPIAELEAKIDSLTAVSRQDEKLDINIDEEVHRLREKSVELTRKIFADLGAWQVAQLARHPRRPYTLDYVRLAFDEFDELAGDRAFADDKAIVGGIARLDGRPVMIIGHQKGRETKEKIRRNFGMPAPEGYRKALRLMEMAERFKMPIITFIDTPGAYPGVGAEERGQSEAIARNLREMSRLSVPVICTVIGEGGSGGALAIGVGDKVNMLQYSTYSVISPEGCASILWKSADKAPLAAEAMGIIAPRLKELKLIDSIVPEPLGGAHRNPEAMAASLKAQLLADLADLDLLSEEELLNRRYQRLMSYGYA</sequence>
<keyword id="KW-0067">ATP-binding</keyword>
<keyword id="KW-0963">Cytoplasm</keyword>
<keyword id="KW-0275">Fatty acid biosynthesis</keyword>
<keyword id="KW-0276">Fatty acid metabolism</keyword>
<keyword id="KW-0444">Lipid biosynthesis</keyword>
<keyword id="KW-0443">Lipid metabolism</keyword>
<keyword id="KW-0547">Nucleotide-binding</keyword>
<keyword id="KW-0808">Transferase</keyword>
<accession>A6T4Y7</accession>
<protein>
    <recommendedName>
        <fullName evidence="1">Acetyl-coenzyme A carboxylase carboxyl transferase subunit alpha</fullName>
        <shortName evidence="1">ACCase subunit alpha</shortName>
        <shortName evidence="1">Acetyl-CoA carboxylase carboxyltransferase subunit alpha</shortName>
        <ecNumber evidence="1">2.1.3.15</ecNumber>
    </recommendedName>
</protein>
<feature type="chain" id="PRO_1000062633" description="Acetyl-coenzyme A carboxylase carboxyl transferase subunit alpha">
    <location>
        <begin position="1"/>
        <end position="319"/>
    </location>
</feature>
<feature type="domain" description="CoA carboxyltransferase C-terminal" evidence="2">
    <location>
        <begin position="35"/>
        <end position="296"/>
    </location>
</feature>
<reference key="1">
    <citation type="submission" date="2006-09" db="EMBL/GenBank/DDBJ databases">
        <authorList>
            <consortium name="The Klebsiella pneumonia Genome Sequencing Project"/>
            <person name="McClelland M."/>
            <person name="Sanderson E.K."/>
            <person name="Spieth J."/>
            <person name="Clifton W.S."/>
            <person name="Latreille P."/>
            <person name="Sabo A."/>
            <person name="Pepin K."/>
            <person name="Bhonagiri V."/>
            <person name="Porwollik S."/>
            <person name="Ali J."/>
            <person name="Wilson R.K."/>
        </authorList>
    </citation>
    <scope>NUCLEOTIDE SEQUENCE [LARGE SCALE GENOMIC DNA]</scope>
    <source>
        <strain>ATCC 700721 / MGH 78578</strain>
    </source>
</reference>
<dbReference type="EC" id="2.1.3.15" evidence="1"/>
<dbReference type="EMBL" id="CP000647">
    <property type="protein sequence ID" value="ABR75658.1"/>
    <property type="molecule type" value="Genomic_DNA"/>
</dbReference>
<dbReference type="RefSeq" id="WP_004145855.1">
    <property type="nucleotide sequence ID" value="NC_009648.1"/>
</dbReference>
<dbReference type="SMR" id="A6T4Y7"/>
<dbReference type="STRING" id="272620.KPN_00198"/>
<dbReference type="jPOST" id="A6T4Y7"/>
<dbReference type="PaxDb" id="272620-KPN_00198"/>
<dbReference type="EnsemblBacteria" id="ABR75658">
    <property type="protein sequence ID" value="ABR75658"/>
    <property type="gene ID" value="KPN_00198"/>
</dbReference>
<dbReference type="GeneID" id="93252397"/>
<dbReference type="KEGG" id="kpn:KPN_00198"/>
<dbReference type="HOGENOM" id="CLU_015486_0_2_6"/>
<dbReference type="UniPathway" id="UPA00655">
    <property type="reaction ID" value="UER00711"/>
</dbReference>
<dbReference type="Proteomes" id="UP000000265">
    <property type="component" value="Chromosome"/>
</dbReference>
<dbReference type="GO" id="GO:0009317">
    <property type="term" value="C:acetyl-CoA carboxylase complex"/>
    <property type="evidence" value="ECO:0007669"/>
    <property type="project" value="InterPro"/>
</dbReference>
<dbReference type="GO" id="GO:0003989">
    <property type="term" value="F:acetyl-CoA carboxylase activity"/>
    <property type="evidence" value="ECO:0007669"/>
    <property type="project" value="InterPro"/>
</dbReference>
<dbReference type="GO" id="GO:0005524">
    <property type="term" value="F:ATP binding"/>
    <property type="evidence" value="ECO:0007669"/>
    <property type="project" value="UniProtKB-KW"/>
</dbReference>
<dbReference type="GO" id="GO:0016743">
    <property type="term" value="F:carboxyl- or carbamoyltransferase activity"/>
    <property type="evidence" value="ECO:0007669"/>
    <property type="project" value="UniProtKB-UniRule"/>
</dbReference>
<dbReference type="GO" id="GO:0006633">
    <property type="term" value="P:fatty acid biosynthetic process"/>
    <property type="evidence" value="ECO:0007669"/>
    <property type="project" value="UniProtKB-KW"/>
</dbReference>
<dbReference type="GO" id="GO:2001295">
    <property type="term" value="P:malonyl-CoA biosynthetic process"/>
    <property type="evidence" value="ECO:0007669"/>
    <property type="project" value="UniProtKB-UniRule"/>
</dbReference>
<dbReference type="FunFam" id="3.90.226.10:FF:000008">
    <property type="entry name" value="Acetyl-coenzyme A carboxylase carboxyl transferase subunit alpha"/>
    <property type="match status" value="1"/>
</dbReference>
<dbReference type="Gene3D" id="3.90.226.10">
    <property type="entry name" value="2-enoyl-CoA Hydratase, Chain A, domain 1"/>
    <property type="match status" value="1"/>
</dbReference>
<dbReference type="HAMAP" id="MF_00823">
    <property type="entry name" value="AcetylCoA_CT_alpha"/>
    <property type="match status" value="1"/>
</dbReference>
<dbReference type="InterPro" id="IPR001095">
    <property type="entry name" value="Acetyl_CoA_COase_a_su"/>
</dbReference>
<dbReference type="InterPro" id="IPR029045">
    <property type="entry name" value="ClpP/crotonase-like_dom_sf"/>
</dbReference>
<dbReference type="InterPro" id="IPR011763">
    <property type="entry name" value="COA_CT_C"/>
</dbReference>
<dbReference type="NCBIfam" id="TIGR00513">
    <property type="entry name" value="accA"/>
    <property type="match status" value="1"/>
</dbReference>
<dbReference type="NCBIfam" id="NF041504">
    <property type="entry name" value="AccA_sub"/>
    <property type="match status" value="1"/>
</dbReference>
<dbReference type="NCBIfam" id="NF004344">
    <property type="entry name" value="PRK05724.1"/>
    <property type="match status" value="1"/>
</dbReference>
<dbReference type="PANTHER" id="PTHR42853">
    <property type="entry name" value="ACETYL-COENZYME A CARBOXYLASE CARBOXYL TRANSFERASE SUBUNIT ALPHA"/>
    <property type="match status" value="1"/>
</dbReference>
<dbReference type="PANTHER" id="PTHR42853:SF3">
    <property type="entry name" value="ACETYL-COENZYME A CARBOXYLASE CARBOXYL TRANSFERASE SUBUNIT ALPHA, CHLOROPLASTIC"/>
    <property type="match status" value="1"/>
</dbReference>
<dbReference type="Pfam" id="PF03255">
    <property type="entry name" value="ACCA"/>
    <property type="match status" value="1"/>
</dbReference>
<dbReference type="PRINTS" id="PR01069">
    <property type="entry name" value="ACCCTRFRASEA"/>
</dbReference>
<dbReference type="SUPFAM" id="SSF52096">
    <property type="entry name" value="ClpP/crotonase"/>
    <property type="match status" value="1"/>
</dbReference>
<dbReference type="PROSITE" id="PS50989">
    <property type="entry name" value="COA_CT_CTER"/>
    <property type="match status" value="1"/>
</dbReference>
<evidence type="ECO:0000255" key="1">
    <source>
        <dbReference type="HAMAP-Rule" id="MF_00823"/>
    </source>
</evidence>
<evidence type="ECO:0000255" key="2">
    <source>
        <dbReference type="PROSITE-ProRule" id="PRU01137"/>
    </source>
</evidence>
<proteinExistence type="inferred from homology"/>
<comment type="function">
    <text evidence="1">Component of the acetyl coenzyme A carboxylase (ACC) complex. First, biotin carboxylase catalyzes the carboxylation of biotin on its carrier protein (BCCP) and then the CO(2) group is transferred by the carboxyltransferase to acetyl-CoA to form malonyl-CoA.</text>
</comment>
<comment type="catalytic activity">
    <reaction evidence="1">
        <text>N(6)-carboxybiotinyl-L-lysyl-[protein] + acetyl-CoA = N(6)-biotinyl-L-lysyl-[protein] + malonyl-CoA</text>
        <dbReference type="Rhea" id="RHEA:54728"/>
        <dbReference type="Rhea" id="RHEA-COMP:10505"/>
        <dbReference type="Rhea" id="RHEA-COMP:10506"/>
        <dbReference type="ChEBI" id="CHEBI:57288"/>
        <dbReference type="ChEBI" id="CHEBI:57384"/>
        <dbReference type="ChEBI" id="CHEBI:83144"/>
        <dbReference type="ChEBI" id="CHEBI:83145"/>
        <dbReference type="EC" id="2.1.3.15"/>
    </reaction>
</comment>
<comment type="pathway">
    <text evidence="1">Lipid metabolism; malonyl-CoA biosynthesis; malonyl-CoA from acetyl-CoA: step 1/1.</text>
</comment>
<comment type="subunit">
    <text evidence="1">Acetyl-CoA carboxylase is a heterohexamer composed of biotin carboxyl carrier protein (AccB), biotin carboxylase (AccC) and two subunits each of ACCase subunit alpha (AccA) and ACCase subunit beta (AccD).</text>
</comment>
<comment type="subcellular location">
    <subcellularLocation>
        <location evidence="1">Cytoplasm</location>
    </subcellularLocation>
</comment>
<comment type="similarity">
    <text evidence="1">Belongs to the AccA family.</text>
</comment>